<sequence>MYVLQEINPGITS</sequence>
<reference key="1">
    <citation type="journal article" date="1998" name="Electrophoresis">
        <title>Two-dimensional gel electrophoresis separation and N-terminal sequence analysis of proteins from Clostridium pasteurianum W5.</title>
        <authorList>
            <person name="Flengsrud R."/>
            <person name="Skjeldal L."/>
        </authorList>
    </citation>
    <scope>PROTEIN SEQUENCE</scope>
    <source>
        <strain>ATCC 6013 / DSM 525 / NCIB 9486 / VKM B-1774 / W5</strain>
    </source>
</reference>
<protein>
    <recommendedName>
        <fullName>Unknown protein CP 12 from 2D-PAGE</fullName>
    </recommendedName>
</protein>
<organism>
    <name type="scientific">Clostridium pasteurianum</name>
    <dbReference type="NCBI Taxonomy" id="1501"/>
    <lineage>
        <taxon>Bacteria</taxon>
        <taxon>Bacillati</taxon>
        <taxon>Bacillota</taxon>
        <taxon>Clostridia</taxon>
        <taxon>Eubacteriales</taxon>
        <taxon>Clostridiaceae</taxon>
        <taxon>Clostridium</taxon>
    </lineage>
</organism>
<keyword id="KW-0903">Direct protein sequencing</keyword>
<feature type="chain" id="PRO_0000055540" description="Unknown protein CP 12 from 2D-PAGE">
    <location>
        <begin position="1"/>
        <end position="13" status="greater than"/>
    </location>
</feature>
<feature type="sequence variant">
    <original>L</original>
    <variation>V</variation>
    <location>
        <position position="4"/>
    </location>
</feature>
<feature type="sequence variant">
    <original>Q</original>
    <variation>I</variation>
    <location>
        <position position="5"/>
    </location>
</feature>
<feature type="non-terminal residue">
    <location>
        <position position="13"/>
    </location>
</feature>
<proteinExistence type="evidence at protein level"/>
<accession>P81353</accession>
<comment type="miscellaneous">
    <text>On the 2D-gel the determined pI of this unknown protein is: 5.8, its MW is: 42.7 kDa.</text>
</comment>
<name>UN12_CLOPA</name>